<sequence length="420" mass="47560">MSFPRGSYDPAASNSSPWWPLSAEDANSSWEAAGHQKGSDPSGDVRNEELAKLEIAVLAVIFVVAVLGNSSVLLALHRTPRKTSRMHLFIRHLSLADLAVAFFQVLPQLCWDITYRFRGPDWLCRVVKHLQVFAMFASAYMLVVMTADRYIAVCHPLKTLQQPTRRSRLMIAASWVLSFLLSTPQYFIFSMIEIEVNNGTKTQDCWATFIQPWGTRAYVTWMTSGVFVVPVVILGTCYGFICYHIWRNVRGKTASRQSKGSGEDVAPFHKGLLVTPCVSSVKTISRAKIRTVKMTFVIVTAYILCWAPFFIVQMWSVWDDNFIWTDSENPSITITALLASLNSCCNPWIYMFFSGHLLQDCVQSFPCCQRMVQKFTKDDSDNMSRRHTSYSNNRSPTNSTGTWKDSPKSSRSIRFIPVST</sequence>
<proteinExistence type="inferred from homology"/>
<organism>
    <name type="scientific">Microtus ochrogaster</name>
    <name type="common">Prairie vole</name>
    <dbReference type="NCBI Taxonomy" id="79684"/>
    <lineage>
        <taxon>Eukaryota</taxon>
        <taxon>Metazoa</taxon>
        <taxon>Chordata</taxon>
        <taxon>Craniata</taxon>
        <taxon>Vertebrata</taxon>
        <taxon>Euteleostomi</taxon>
        <taxon>Mammalia</taxon>
        <taxon>Eutheria</taxon>
        <taxon>Euarchontoglires</taxon>
        <taxon>Glires</taxon>
        <taxon>Rodentia</taxon>
        <taxon>Myomorpha</taxon>
        <taxon>Muroidea</taxon>
        <taxon>Cricetidae</taxon>
        <taxon>Arvicolinae</taxon>
        <taxon>Microtus</taxon>
    </lineage>
</organism>
<feature type="chain" id="PRO_0000070199" description="Vasopressin V1a receptor">
    <location>
        <begin position="1"/>
        <end position="420"/>
    </location>
</feature>
<feature type="topological domain" description="Extracellular" evidence="3">
    <location>
        <begin position="1"/>
        <end position="54"/>
    </location>
</feature>
<feature type="transmembrane region" description="Helical; Name=1" evidence="3">
    <location>
        <begin position="55"/>
        <end position="75"/>
    </location>
</feature>
<feature type="topological domain" description="Cytoplasmic" evidence="3">
    <location>
        <begin position="76"/>
        <end position="92"/>
    </location>
</feature>
<feature type="transmembrane region" description="Helical; Name=2" evidence="3">
    <location>
        <begin position="93"/>
        <end position="113"/>
    </location>
</feature>
<feature type="topological domain" description="Extracellular" evidence="3">
    <location>
        <begin position="114"/>
        <end position="125"/>
    </location>
</feature>
<feature type="transmembrane region" description="Helical; Name=3" evidence="3">
    <location>
        <begin position="126"/>
        <end position="146"/>
    </location>
</feature>
<feature type="topological domain" description="Cytoplasmic" evidence="3">
    <location>
        <begin position="147"/>
        <end position="168"/>
    </location>
</feature>
<feature type="transmembrane region" description="Helical; Name=4" evidence="3">
    <location>
        <begin position="169"/>
        <end position="189"/>
    </location>
</feature>
<feature type="topological domain" description="Extracellular" evidence="3">
    <location>
        <begin position="190"/>
        <end position="225"/>
    </location>
</feature>
<feature type="transmembrane region" description="Helical; Name=5" evidence="3">
    <location>
        <begin position="226"/>
        <end position="246"/>
    </location>
</feature>
<feature type="topological domain" description="Cytoplasmic" evidence="3">
    <location>
        <begin position="247"/>
        <end position="294"/>
    </location>
</feature>
<feature type="transmembrane region" description="Helical; Name=6" evidence="3">
    <location>
        <begin position="295"/>
        <end position="315"/>
    </location>
</feature>
<feature type="topological domain" description="Extracellular" evidence="3">
    <location>
        <begin position="316"/>
        <end position="331"/>
    </location>
</feature>
<feature type="transmembrane region" description="Helical; Name=7" evidence="3">
    <location>
        <begin position="332"/>
        <end position="352"/>
    </location>
</feature>
<feature type="topological domain" description="Cytoplasmic" evidence="3">
    <location>
        <begin position="353"/>
        <end position="420"/>
    </location>
</feature>
<feature type="region of interest" description="Disordered" evidence="5">
    <location>
        <begin position="1"/>
        <end position="20"/>
    </location>
</feature>
<feature type="region of interest" description="Disordered" evidence="5">
    <location>
        <begin position="379"/>
        <end position="411"/>
    </location>
</feature>
<feature type="compositionally biased region" description="Polar residues" evidence="5">
    <location>
        <begin position="389"/>
        <end position="403"/>
    </location>
</feature>
<feature type="modified residue" description="Phosphoserine" evidence="2">
    <location>
        <position position="406"/>
    </location>
</feature>
<feature type="lipid moiety-binding region" description="S-palmitoyl cysteine" evidence="1">
    <location>
        <position position="367"/>
    </location>
</feature>
<feature type="lipid moiety-binding region" description="S-palmitoyl cysteine" evidence="1">
    <location>
        <position position="368"/>
    </location>
</feature>
<feature type="glycosylation site" description="N-linked (GlcNAc...) asparagine" evidence="3">
    <location>
        <position position="27"/>
    </location>
</feature>
<feature type="glycosylation site" description="N-linked (GlcNAc...) asparagine" evidence="3">
    <location>
        <position position="198"/>
    </location>
</feature>
<feature type="disulfide bond" evidence="4">
    <location>
        <begin position="124"/>
        <end position="205"/>
    </location>
</feature>
<name>V1AR_MICOH</name>
<comment type="function">
    <text evidence="6">Receptor for arginine vasopressin. The activity of this receptor is mediated by G proteins which activate a phosphatidyl-inositol-calcium second messenger system. Involved in social memory formation.</text>
</comment>
<comment type="subcellular location">
    <subcellularLocation>
        <location>Cell membrane</location>
        <topology>Multi-pass membrane protein</topology>
    </subcellularLocation>
</comment>
<comment type="miscellaneous">
    <text>In prairie and pine voles, the 5' regulatory region of AVPR1A contains a microsatellite region that is virtually absent from montane and meadow voles. This species-specific microsatellite polymorphism modulates gene expression in a cell-type-dependent manner and generates a great individual variability in the brain expression pattern. This polymorphism is correlated with monogamous social organization.</text>
</comment>
<comment type="miscellaneous">
    <text>Prairie voles exhibit a monogamous social structure in nature, whereas closely related meadow voles are solitary and polygamous. AVPR1A is expressed at higher levels in the ventral forebrain of monogamous than in promiscuous vole species, whereas dopamine receptor distribution is relatively conserved between species. The partner preference formation in the socially promiscuous meadow vole is increased by AVPR1A gene transfer into the ventral forebrain.</text>
</comment>
<comment type="similarity">
    <text evidence="4">Belongs to the G-protein coupled receptor 1 family. Vasopressin/oxytocin receptor subfamily.</text>
</comment>
<comment type="online information" name="Protein Spotlight">
    <link uri="https://www.proteinspotlight.org/back_issues/052"/>
    <text>Nature's philanderers - Issue 52 of November 2004</text>
</comment>
<dbReference type="EMBL" id="AF069304">
    <property type="protein sequence ID" value="AAD02821.2"/>
    <property type="molecule type" value="Genomic_DNA"/>
</dbReference>
<dbReference type="SMR" id="Q9WTV9"/>
<dbReference type="BindingDB" id="Q9WTV9"/>
<dbReference type="ChEMBL" id="CHEMBL2016428"/>
<dbReference type="GlyCosmos" id="Q9WTV9">
    <property type="glycosylation" value="2 sites, No reported glycans"/>
</dbReference>
<dbReference type="Proteomes" id="UP000694915">
    <property type="component" value="Unplaced"/>
</dbReference>
<dbReference type="GO" id="GO:0005886">
    <property type="term" value="C:plasma membrane"/>
    <property type="evidence" value="ECO:0007669"/>
    <property type="project" value="UniProtKB-SubCell"/>
</dbReference>
<dbReference type="GO" id="GO:0042277">
    <property type="term" value="F:peptide binding"/>
    <property type="evidence" value="ECO:0007669"/>
    <property type="project" value="TreeGrafter"/>
</dbReference>
<dbReference type="GO" id="GO:0005000">
    <property type="term" value="F:vasopressin receptor activity"/>
    <property type="evidence" value="ECO:0007669"/>
    <property type="project" value="InterPro"/>
</dbReference>
<dbReference type="GO" id="GO:0032870">
    <property type="term" value="P:cellular response to hormone stimulus"/>
    <property type="evidence" value="ECO:0007669"/>
    <property type="project" value="TreeGrafter"/>
</dbReference>
<dbReference type="GO" id="GO:0045907">
    <property type="term" value="P:positive regulation of vasoconstriction"/>
    <property type="evidence" value="ECO:0007669"/>
    <property type="project" value="TreeGrafter"/>
</dbReference>
<dbReference type="GO" id="GO:0001992">
    <property type="term" value="P:regulation of systemic arterial blood pressure by vasopressin"/>
    <property type="evidence" value="ECO:0007669"/>
    <property type="project" value="TreeGrafter"/>
</dbReference>
<dbReference type="CDD" id="cd15385">
    <property type="entry name" value="7tmA_V1aR"/>
    <property type="match status" value="1"/>
</dbReference>
<dbReference type="FunFam" id="1.20.1070.10:FF:000094">
    <property type="entry name" value="Vasopressin V1a receptor"/>
    <property type="match status" value="1"/>
</dbReference>
<dbReference type="Gene3D" id="1.20.1070.10">
    <property type="entry name" value="Rhodopsin 7-helix transmembrane proteins"/>
    <property type="match status" value="1"/>
</dbReference>
<dbReference type="InterPro" id="IPR000276">
    <property type="entry name" value="GPCR_Rhodpsn"/>
</dbReference>
<dbReference type="InterPro" id="IPR017452">
    <property type="entry name" value="GPCR_Rhodpsn_7TM"/>
</dbReference>
<dbReference type="InterPro" id="IPR015076">
    <property type="entry name" value="V1R_C"/>
</dbReference>
<dbReference type="InterPro" id="IPR001817">
    <property type="entry name" value="Vasoprsn_rcpt"/>
</dbReference>
<dbReference type="InterPro" id="IPR001224">
    <property type="entry name" value="Vprs_V1A_rcpt"/>
</dbReference>
<dbReference type="PANTHER" id="PTHR24241">
    <property type="entry name" value="NEUROPEPTIDE RECEPTOR-RELATED G-PROTEIN COUPLED RECEPTOR"/>
    <property type="match status" value="1"/>
</dbReference>
<dbReference type="PANTHER" id="PTHR24241:SF17">
    <property type="entry name" value="VASOPRESSIN V1A RECEPTOR"/>
    <property type="match status" value="1"/>
</dbReference>
<dbReference type="Pfam" id="PF00001">
    <property type="entry name" value="7tm_1"/>
    <property type="match status" value="1"/>
</dbReference>
<dbReference type="Pfam" id="PF08983">
    <property type="entry name" value="V1R_C"/>
    <property type="match status" value="1"/>
</dbReference>
<dbReference type="PRINTS" id="PR00237">
    <property type="entry name" value="GPCRRHODOPSN"/>
</dbReference>
<dbReference type="PRINTS" id="PR00896">
    <property type="entry name" value="VASOPRESSINR"/>
</dbReference>
<dbReference type="PRINTS" id="PR00752">
    <property type="entry name" value="VASOPRSNV1AR"/>
</dbReference>
<dbReference type="SMART" id="SM01164">
    <property type="entry name" value="DUF1856"/>
    <property type="match status" value="1"/>
</dbReference>
<dbReference type="SUPFAM" id="SSF81321">
    <property type="entry name" value="Family A G protein-coupled receptor-like"/>
    <property type="match status" value="1"/>
</dbReference>
<dbReference type="PROSITE" id="PS00237">
    <property type="entry name" value="G_PROTEIN_RECEP_F1_1"/>
    <property type="match status" value="1"/>
</dbReference>
<dbReference type="PROSITE" id="PS50262">
    <property type="entry name" value="G_PROTEIN_RECEP_F1_2"/>
    <property type="match status" value="1"/>
</dbReference>
<reference key="1">
    <citation type="journal article" date="1999" name="Nature">
        <title>Increased affiliative response to vasopressin in mice expressing the V1a receptor from a monogamous vole.</title>
        <authorList>
            <person name="Young L.J."/>
            <person name="Nilsen R."/>
            <person name="Waymire K.G."/>
            <person name="MacGregor G.R."/>
            <person name="Insel T.R."/>
        </authorList>
    </citation>
    <scope>NUCLEOTIDE SEQUENCE [GENOMIC DNA]</scope>
    <source>
        <tissue>Brain</tissue>
    </source>
</reference>
<reference key="2">
    <citation type="journal article" date="2004" name="Nature">
        <title>Enhanced partner preference in a promiscuous species by manipulating the expression of a single gene.</title>
        <authorList>
            <person name="Lim M.M."/>
            <person name="Wang Z."/>
            <person name="Olazabal D.E."/>
            <person name="Ren X."/>
            <person name="Terwilliger E.F."/>
            <person name="Young L.J."/>
        </authorList>
    </citation>
    <scope>ROLE IN SOCIAL BEHAVIOR</scope>
</reference>
<evidence type="ECO:0000250" key="1"/>
<evidence type="ECO:0000250" key="2">
    <source>
        <dbReference type="UniProtKB" id="Q62463"/>
    </source>
</evidence>
<evidence type="ECO:0000255" key="3"/>
<evidence type="ECO:0000255" key="4">
    <source>
        <dbReference type="PROSITE-ProRule" id="PRU00521"/>
    </source>
</evidence>
<evidence type="ECO:0000256" key="5">
    <source>
        <dbReference type="SAM" id="MobiDB-lite"/>
    </source>
</evidence>
<evidence type="ECO:0000269" key="6">
    <source>
    </source>
</evidence>
<protein>
    <recommendedName>
        <fullName>Vasopressin V1a receptor</fullName>
        <shortName>V1aR</shortName>
    </recommendedName>
    <alternativeName>
        <fullName>AVPR V1a</fullName>
    </alternativeName>
    <alternativeName>
        <fullName>Antidiuretic hormone receptor 1a</fullName>
    </alternativeName>
    <alternativeName>
        <fullName>Vascular/hepatic-type arginine vasopressin receptor</fullName>
    </alternativeName>
</protein>
<gene>
    <name type="primary">Avpr1a</name>
</gene>
<keyword id="KW-1003">Cell membrane</keyword>
<keyword id="KW-1015">Disulfide bond</keyword>
<keyword id="KW-0297">G-protein coupled receptor</keyword>
<keyword id="KW-0325">Glycoprotein</keyword>
<keyword id="KW-0449">Lipoprotein</keyword>
<keyword id="KW-0472">Membrane</keyword>
<keyword id="KW-0564">Palmitate</keyword>
<keyword id="KW-0597">Phosphoprotein</keyword>
<keyword id="KW-0675">Receptor</keyword>
<keyword id="KW-0807">Transducer</keyword>
<keyword id="KW-0812">Transmembrane</keyword>
<keyword id="KW-1133">Transmembrane helix</keyword>
<accession>Q9WTV9</accession>